<keyword id="KW-0963">Cytoplasm</keyword>
<keyword id="KW-0597">Phosphoprotein</keyword>
<keyword id="KW-1267">Proteomics identification</keyword>
<keyword id="KW-1185">Reference proteome</keyword>
<comment type="function">
    <text evidence="8">Involved in epithelial cell integrity by acting on the maintenance of the actin cytoskeleton. Positively regulates the actin polymerization, by inhibiting the interaction of actin-capping proteins with actin.</text>
</comment>
<comment type="subunit">
    <text evidence="8">Directly interacts with actin-capping proteins CAPZA1, CAPZA2 and CAPZB; this interaction decreases the binding of capping proteins to actin.</text>
</comment>
<comment type="subcellular location">
    <subcellularLocation>
        <location evidence="12">Cytoplasm</location>
        <location evidence="12">Cytosol</location>
    </subcellularLocation>
</comment>
<comment type="tissue specificity">
    <text evidence="8">Expressed in intestinal epithelial cells (at protein level).</text>
</comment>
<comment type="disease">
    <text evidence="8">In colorectal cancers, CRACD gene is observed to be often the target of inactivating mutations. In the absence of genetic mutations, expression levels tend to be down-regulated.</text>
</comment>
<comment type="sequence caution" evidence="11">
    <conflict type="miscellaneous discrepancy">
        <sequence resource="EMBL-CDS" id="BAA86525"/>
    </conflict>
    <text>Unlikely isoform. Aberrant splice sites.</text>
</comment>
<comment type="sequence caution" evidence="11">
    <conflict type="erroneous initiation">
        <sequence resource="EMBL-CDS" id="CAB61360"/>
    </conflict>
    <text>Truncated N-terminus.</text>
</comment>
<accession>Q6ZU35</accession>
<accession>Q9NTE2</accession>
<accession>Q9NTP8</accession>
<accession>Q9ULK9</accession>
<reference key="1">
    <citation type="journal article" date="1999" name="DNA Res.">
        <title>Prediction of the coding sequences of unidentified human genes. XV. The complete sequences of 100 new cDNA clones from brain which code for large proteins in vitro.</title>
        <authorList>
            <person name="Nagase T."/>
            <person name="Ishikawa K."/>
            <person name="Kikuno R."/>
            <person name="Hirosawa M."/>
            <person name="Nomura N."/>
            <person name="Ohara O."/>
        </authorList>
    </citation>
    <scope>NUCLEOTIDE SEQUENCE [LARGE SCALE MRNA]</scope>
    <scope>VARIANT PRO-655</scope>
    <source>
        <tissue>Brain</tissue>
    </source>
</reference>
<reference key="2">
    <citation type="journal article" date="2004" name="Nat. Genet.">
        <title>Complete sequencing and characterization of 21,243 full-length human cDNAs.</title>
        <authorList>
            <person name="Ota T."/>
            <person name="Suzuki Y."/>
            <person name="Nishikawa T."/>
            <person name="Otsuki T."/>
            <person name="Sugiyama T."/>
            <person name="Irie R."/>
            <person name="Wakamatsu A."/>
            <person name="Hayashi K."/>
            <person name="Sato H."/>
            <person name="Nagai K."/>
            <person name="Kimura K."/>
            <person name="Makita H."/>
            <person name="Sekine M."/>
            <person name="Obayashi M."/>
            <person name="Nishi T."/>
            <person name="Shibahara T."/>
            <person name="Tanaka T."/>
            <person name="Ishii S."/>
            <person name="Yamamoto J."/>
            <person name="Saito K."/>
            <person name="Kawai Y."/>
            <person name="Isono Y."/>
            <person name="Nakamura Y."/>
            <person name="Nagahari K."/>
            <person name="Murakami K."/>
            <person name="Yasuda T."/>
            <person name="Iwayanagi T."/>
            <person name="Wagatsuma M."/>
            <person name="Shiratori A."/>
            <person name="Sudo H."/>
            <person name="Hosoiri T."/>
            <person name="Kaku Y."/>
            <person name="Kodaira H."/>
            <person name="Kondo H."/>
            <person name="Sugawara M."/>
            <person name="Takahashi M."/>
            <person name="Kanda K."/>
            <person name="Yokoi T."/>
            <person name="Furuya T."/>
            <person name="Kikkawa E."/>
            <person name="Omura Y."/>
            <person name="Abe K."/>
            <person name="Kamihara K."/>
            <person name="Katsuta N."/>
            <person name="Sato K."/>
            <person name="Tanikawa M."/>
            <person name="Yamazaki M."/>
            <person name="Ninomiya K."/>
            <person name="Ishibashi T."/>
            <person name="Yamashita H."/>
            <person name="Murakawa K."/>
            <person name="Fujimori K."/>
            <person name="Tanai H."/>
            <person name="Kimata M."/>
            <person name="Watanabe M."/>
            <person name="Hiraoka S."/>
            <person name="Chiba Y."/>
            <person name="Ishida S."/>
            <person name="Ono Y."/>
            <person name="Takiguchi S."/>
            <person name="Watanabe S."/>
            <person name="Yosida M."/>
            <person name="Hotuta T."/>
            <person name="Kusano J."/>
            <person name="Kanehori K."/>
            <person name="Takahashi-Fujii A."/>
            <person name="Hara H."/>
            <person name="Tanase T.-O."/>
            <person name="Nomura Y."/>
            <person name="Togiya S."/>
            <person name="Komai F."/>
            <person name="Hara R."/>
            <person name="Takeuchi K."/>
            <person name="Arita M."/>
            <person name="Imose N."/>
            <person name="Musashino K."/>
            <person name="Yuuki H."/>
            <person name="Oshima A."/>
            <person name="Sasaki N."/>
            <person name="Aotsuka S."/>
            <person name="Yoshikawa Y."/>
            <person name="Matsunawa H."/>
            <person name="Ichihara T."/>
            <person name="Shiohata N."/>
            <person name="Sano S."/>
            <person name="Moriya S."/>
            <person name="Momiyama H."/>
            <person name="Satoh N."/>
            <person name="Takami S."/>
            <person name="Terashima Y."/>
            <person name="Suzuki O."/>
            <person name="Nakagawa S."/>
            <person name="Senoh A."/>
            <person name="Mizoguchi H."/>
            <person name="Goto Y."/>
            <person name="Shimizu F."/>
            <person name="Wakebe H."/>
            <person name="Hishigaki H."/>
            <person name="Watanabe T."/>
            <person name="Sugiyama A."/>
            <person name="Takemoto M."/>
            <person name="Kawakami B."/>
            <person name="Yamazaki M."/>
            <person name="Watanabe K."/>
            <person name="Kumagai A."/>
            <person name="Itakura S."/>
            <person name="Fukuzumi Y."/>
            <person name="Fujimori Y."/>
            <person name="Komiyama M."/>
            <person name="Tashiro H."/>
            <person name="Tanigami A."/>
            <person name="Fujiwara T."/>
            <person name="Ono T."/>
            <person name="Yamada K."/>
            <person name="Fujii Y."/>
            <person name="Ozaki K."/>
            <person name="Hirao M."/>
            <person name="Ohmori Y."/>
            <person name="Kawabata A."/>
            <person name="Hikiji T."/>
            <person name="Kobatake N."/>
            <person name="Inagaki H."/>
            <person name="Ikema Y."/>
            <person name="Okamoto S."/>
            <person name="Okitani R."/>
            <person name="Kawakami T."/>
            <person name="Noguchi S."/>
            <person name="Itoh T."/>
            <person name="Shigeta K."/>
            <person name="Senba T."/>
            <person name="Matsumura K."/>
            <person name="Nakajima Y."/>
            <person name="Mizuno T."/>
            <person name="Morinaga M."/>
            <person name="Sasaki M."/>
            <person name="Togashi T."/>
            <person name="Oyama M."/>
            <person name="Hata H."/>
            <person name="Watanabe M."/>
            <person name="Komatsu T."/>
            <person name="Mizushima-Sugano J."/>
            <person name="Satoh T."/>
            <person name="Shirai Y."/>
            <person name="Takahashi Y."/>
            <person name="Nakagawa K."/>
            <person name="Okumura K."/>
            <person name="Nagase T."/>
            <person name="Nomura N."/>
            <person name="Kikuchi H."/>
            <person name="Masuho Y."/>
            <person name="Yamashita R."/>
            <person name="Nakai K."/>
            <person name="Yada T."/>
            <person name="Nakamura Y."/>
            <person name="Ohara O."/>
            <person name="Isogai T."/>
            <person name="Sugano S."/>
        </authorList>
    </citation>
    <scope>NUCLEOTIDE SEQUENCE [LARGE SCALE MRNA]</scope>
    <scope>VARIANTS PRO-655 AND LEU-776</scope>
    <source>
        <tissue>Testis</tissue>
    </source>
</reference>
<reference key="3">
    <citation type="journal article" date="2005" name="Nature">
        <title>Generation and annotation of the DNA sequences of human chromosomes 2 and 4.</title>
        <authorList>
            <person name="Hillier L.W."/>
            <person name="Graves T.A."/>
            <person name="Fulton R.S."/>
            <person name="Fulton L.A."/>
            <person name="Pepin K.H."/>
            <person name="Minx P."/>
            <person name="Wagner-McPherson C."/>
            <person name="Layman D."/>
            <person name="Wylie K."/>
            <person name="Sekhon M."/>
            <person name="Becker M.C."/>
            <person name="Fewell G.A."/>
            <person name="Delehaunty K.D."/>
            <person name="Miner T.L."/>
            <person name="Nash W.E."/>
            <person name="Kremitzki C."/>
            <person name="Oddy L."/>
            <person name="Du H."/>
            <person name="Sun H."/>
            <person name="Bradshaw-Cordum H."/>
            <person name="Ali J."/>
            <person name="Carter J."/>
            <person name="Cordes M."/>
            <person name="Harris A."/>
            <person name="Isak A."/>
            <person name="van Brunt A."/>
            <person name="Nguyen C."/>
            <person name="Du F."/>
            <person name="Courtney L."/>
            <person name="Kalicki J."/>
            <person name="Ozersky P."/>
            <person name="Abbott S."/>
            <person name="Armstrong J."/>
            <person name="Belter E.A."/>
            <person name="Caruso L."/>
            <person name="Cedroni M."/>
            <person name="Cotton M."/>
            <person name="Davidson T."/>
            <person name="Desai A."/>
            <person name="Elliott G."/>
            <person name="Erb T."/>
            <person name="Fronick C."/>
            <person name="Gaige T."/>
            <person name="Haakenson W."/>
            <person name="Haglund K."/>
            <person name="Holmes A."/>
            <person name="Harkins R."/>
            <person name="Kim K."/>
            <person name="Kruchowski S.S."/>
            <person name="Strong C.M."/>
            <person name="Grewal N."/>
            <person name="Goyea E."/>
            <person name="Hou S."/>
            <person name="Levy A."/>
            <person name="Martinka S."/>
            <person name="Mead K."/>
            <person name="McLellan M.D."/>
            <person name="Meyer R."/>
            <person name="Randall-Maher J."/>
            <person name="Tomlinson C."/>
            <person name="Dauphin-Kohlberg S."/>
            <person name="Kozlowicz-Reilly A."/>
            <person name="Shah N."/>
            <person name="Swearengen-Shahid S."/>
            <person name="Snider J."/>
            <person name="Strong J.T."/>
            <person name="Thompson J."/>
            <person name="Yoakum M."/>
            <person name="Leonard S."/>
            <person name="Pearman C."/>
            <person name="Trani L."/>
            <person name="Radionenko M."/>
            <person name="Waligorski J.E."/>
            <person name="Wang C."/>
            <person name="Rock S.M."/>
            <person name="Tin-Wollam A.-M."/>
            <person name="Maupin R."/>
            <person name="Latreille P."/>
            <person name="Wendl M.C."/>
            <person name="Yang S.-P."/>
            <person name="Pohl C."/>
            <person name="Wallis J.W."/>
            <person name="Spieth J."/>
            <person name="Bieri T.A."/>
            <person name="Berkowicz N."/>
            <person name="Nelson J.O."/>
            <person name="Osborne J."/>
            <person name="Ding L."/>
            <person name="Meyer R."/>
            <person name="Sabo A."/>
            <person name="Shotland Y."/>
            <person name="Sinha P."/>
            <person name="Wohldmann P.E."/>
            <person name="Cook L.L."/>
            <person name="Hickenbotham M.T."/>
            <person name="Eldred J."/>
            <person name="Williams D."/>
            <person name="Jones T.A."/>
            <person name="She X."/>
            <person name="Ciccarelli F.D."/>
            <person name="Izaurralde E."/>
            <person name="Taylor J."/>
            <person name="Schmutz J."/>
            <person name="Myers R.M."/>
            <person name="Cox D.R."/>
            <person name="Huang X."/>
            <person name="McPherson J.D."/>
            <person name="Mardis E.R."/>
            <person name="Clifton S.W."/>
            <person name="Warren W.C."/>
            <person name="Chinwalla A.T."/>
            <person name="Eddy S.R."/>
            <person name="Marra M.A."/>
            <person name="Ovcharenko I."/>
            <person name="Furey T.S."/>
            <person name="Miller W."/>
            <person name="Eichler E.E."/>
            <person name="Bork P."/>
            <person name="Suyama M."/>
            <person name="Torrents D."/>
            <person name="Waterston R.H."/>
            <person name="Wilson R.K."/>
        </authorList>
    </citation>
    <scope>NUCLEOTIDE SEQUENCE [LARGE SCALE GENOMIC DNA]</scope>
</reference>
<reference key="4">
    <citation type="submission" date="2005-07" db="EMBL/GenBank/DDBJ databases">
        <authorList>
            <person name="Mural R.J."/>
            <person name="Istrail S."/>
            <person name="Sutton G.G."/>
            <person name="Florea L."/>
            <person name="Halpern A.L."/>
            <person name="Mobarry C.M."/>
            <person name="Lippert R."/>
            <person name="Walenz B."/>
            <person name="Shatkay H."/>
            <person name="Dew I."/>
            <person name="Miller J.R."/>
            <person name="Flanigan M.J."/>
            <person name="Edwards N.J."/>
            <person name="Bolanos R."/>
            <person name="Fasulo D."/>
            <person name="Halldorsson B.V."/>
            <person name="Hannenhalli S."/>
            <person name="Turner R."/>
            <person name="Yooseph S."/>
            <person name="Lu F."/>
            <person name="Nusskern D.R."/>
            <person name="Shue B.C."/>
            <person name="Zheng X.H."/>
            <person name="Zhong F."/>
            <person name="Delcher A.L."/>
            <person name="Huson D.H."/>
            <person name="Kravitz S.A."/>
            <person name="Mouchard L."/>
            <person name="Reinert K."/>
            <person name="Remington K.A."/>
            <person name="Clark A.G."/>
            <person name="Waterman M.S."/>
            <person name="Eichler E.E."/>
            <person name="Adams M.D."/>
            <person name="Hunkapiller M.W."/>
            <person name="Myers E.W."/>
            <person name="Venter J.C."/>
        </authorList>
    </citation>
    <scope>NUCLEOTIDE SEQUENCE [LARGE SCALE GENOMIC DNA]</scope>
    <scope>VARIANT PRO-655</scope>
</reference>
<reference key="5">
    <citation type="journal article" date="2001" name="Genome Res.">
        <title>Towards a catalog of human genes and proteins: sequencing and analysis of 500 novel complete protein coding human cDNAs.</title>
        <authorList>
            <person name="Wiemann S."/>
            <person name="Weil B."/>
            <person name="Wellenreuther R."/>
            <person name="Gassenhuber J."/>
            <person name="Glassl S."/>
            <person name="Ansorge W."/>
            <person name="Boecher M."/>
            <person name="Bloecker H."/>
            <person name="Bauersachs S."/>
            <person name="Blum H."/>
            <person name="Lauber J."/>
            <person name="Duesterhoeft A."/>
            <person name="Beyer A."/>
            <person name="Koehrer K."/>
            <person name="Strack N."/>
            <person name="Mewes H.-W."/>
            <person name="Ottenwaelder B."/>
            <person name="Obermaier B."/>
            <person name="Tampe J."/>
            <person name="Heubner D."/>
            <person name="Wambutt R."/>
            <person name="Korn B."/>
            <person name="Klein M."/>
            <person name="Poustka A."/>
        </authorList>
    </citation>
    <scope>NUCLEOTIDE SEQUENCE [LARGE SCALE MRNA] OF 400-1233</scope>
    <scope>VARIANT PRO-655</scope>
    <source>
        <tissue>Testis</tissue>
    </source>
</reference>
<reference key="6">
    <citation type="journal article" date="2007" name="BMC Genomics">
        <title>The full-ORF clone resource of the German cDNA consortium.</title>
        <authorList>
            <person name="Bechtel S."/>
            <person name="Rosenfelder H."/>
            <person name="Duda A."/>
            <person name="Schmidt C.P."/>
            <person name="Ernst U."/>
            <person name="Wellenreuther R."/>
            <person name="Mehrle A."/>
            <person name="Schuster C."/>
            <person name="Bahr A."/>
            <person name="Bloecker H."/>
            <person name="Heubner D."/>
            <person name="Hoerlein A."/>
            <person name="Michel G."/>
            <person name="Wedler H."/>
            <person name="Koehrer K."/>
            <person name="Ottenwaelder B."/>
            <person name="Poustka A."/>
            <person name="Wiemann S."/>
            <person name="Schupp I."/>
        </authorList>
    </citation>
    <scope>NUCLEOTIDE SEQUENCE [LARGE SCALE MRNA] OF 612-1233</scope>
    <scope>VARIANT PRO-655</scope>
    <source>
        <tissue>Testis</tissue>
    </source>
</reference>
<reference key="7">
    <citation type="journal article" date="2008" name="J. Proteome Res.">
        <title>Combining protein-based IMAC, peptide-based IMAC, and MudPIT for efficient phosphoproteomic analysis.</title>
        <authorList>
            <person name="Cantin G.T."/>
            <person name="Yi W."/>
            <person name="Lu B."/>
            <person name="Park S.K."/>
            <person name="Xu T."/>
            <person name="Lee J.-D."/>
            <person name="Yates J.R. III"/>
        </authorList>
    </citation>
    <scope>IDENTIFICATION BY MASS SPECTROMETRY [LARGE SCALE ANALYSIS]</scope>
    <source>
        <tissue>Cervix carcinoma</tissue>
    </source>
</reference>
<reference key="8">
    <citation type="journal article" date="2008" name="Proc. Natl. Acad. Sci. U.S.A.">
        <title>A quantitative atlas of mitotic phosphorylation.</title>
        <authorList>
            <person name="Dephoure N."/>
            <person name="Zhou C."/>
            <person name="Villen J."/>
            <person name="Beausoleil S.A."/>
            <person name="Bakalarski C.E."/>
            <person name="Elledge S.J."/>
            <person name="Gygi S.P."/>
        </authorList>
    </citation>
    <scope>PHOSPHORYLATION [LARGE SCALE ANALYSIS] AT SER-556 AND THR-559</scope>
    <scope>IDENTIFICATION BY MASS SPECTROMETRY [LARGE SCALE ANALYSIS]</scope>
    <source>
        <tissue>Cervix carcinoma</tissue>
    </source>
</reference>
<reference key="9">
    <citation type="journal article" date="2009" name="Anal. Chem.">
        <title>Lys-N and trypsin cover complementary parts of the phosphoproteome in a refined SCX-based approach.</title>
        <authorList>
            <person name="Gauci S."/>
            <person name="Helbig A.O."/>
            <person name="Slijper M."/>
            <person name="Krijgsveld J."/>
            <person name="Heck A.J."/>
            <person name="Mohammed S."/>
        </authorList>
    </citation>
    <scope>IDENTIFICATION BY MASS SPECTROMETRY [LARGE SCALE ANALYSIS]</scope>
</reference>
<reference key="10">
    <citation type="journal article" date="2010" name="Sci. Signal.">
        <title>Quantitative phosphoproteomics reveals widespread full phosphorylation site occupancy during mitosis.</title>
        <authorList>
            <person name="Olsen J.V."/>
            <person name="Vermeulen M."/>
            <person name="Santamaria A."/>
            <person name="Kumar C."/>
            <person name="Miller M.L."/>
            <person name="Jensen L.J."/>
            <person name="Gnad F."/>
            <person name="Cox J."/>
            <person name="Jensen T.S."/>
            <person name="Nigg E.A."/>
            <person name="Brunak S."/>
            <person name="Mann M."/>
        </authorList>
    </citation>
    <scope>IDENTIFICATION BY MASS SPECTROMETRY [LARGE SCALE ANALYSIS]</scope>
    <source>
        <tissue>Cervix carcinoma</tissue>
    </source>
</reference>
<reference key="11">
    <citation type="journal article" date="2011" name="Sci. Signal.">
        <title>System-wide temporal characterization of the proteome and phosphoproteome of human embryonic stem cell differentiation.</title>
        <authorList>
            <person name="Rigbolt K.T."/>
            <person name="Prokhorova T.A."/>
            <person name="Akimov V."/>
            <person name="Henningsen J."/>
            <person name="Johansen P.T."/>
            <person name="Kratchmarova I."/>
            <person name="Kassem M."/>
            <person name="Mann M."/>
            <person name="Olsen J.V."/>
            <person name="Blagoev B."/>
        </authorList>
    </citation>
    <scope>PHOSPHORYLATION [LARGE SCALE ANALYSIS] AT THR-971 AND SER-975</scope>
    <scope>IDENTIFICATION BY MASS SPECTROMETRY [LARGE SCALE ANALYSIS]</scope>
</reference>
<reference key="12">
    <citation type="journal article" date="2013" name="J. Proteome Res.">
        <title>Toward a comprehensive characterization of a human cancer cell phosphoproteome.</title>
        <authorList>
            <person name="Zhou H."/>
            <person name="Di Palma S."/>
            <person name="Preisinger C."/>
            <person name="Peng M."/>
            <person name="Polat A.N."/>
            <person name="Heck A.J."/>
            <person name="Mohammed S."/>
        </authorList>
    </citation>
    <scope>PHOSPHORYLATION [LARGE SCALE ANALYSIS] AT SER-556 AND SER-1017</scope>
    <scope>IDENTIFICATION BY MASS SPECTROMETRY [LARGE SCALE ANALYSIS]</scope>
    <source>
        <tissue>Cervix carcinoma</tissue>
    </source>
</reference>
<reference key="13">
    <citation type="journal article" date="2014" name="J. Proteomics">
        <title>An enzyme assisted RP-RPLC approach for in-depth analysis of human liver phosphoproteome.</title>
        <authorList>
            <person name="Bian Y."/>
            <person name="Song C."/>
            <person name="Cheng K."/>
            <person name="Dong M."/>
            <person name="Wang F."/>
            <person name="Huang J."/>
            <person name="Sun D."/>
            <person name="Wang L."/>
            <person name="Ye M."/>
            <person name="Zou H."/>
        </authorList>
    </citation>
    <scope>PHOSPHORYLATION [LARGE SCALE ANALYSIS] AT SER-420</scope>
    <scope>IDENTIFICATION BY MASS SPECTROMETRY [LARGE SCALE ANALYSIS]</scope>
    <source>
        <tissue>Liver</tissue>
    </source>
</reference>
<reference key="14">
    <citation type="journal article" date="2017" name="J. Stroke Cerebrovasc. Dis.">
        <title>Exome sequencing identified CCER2 as a novel candidate gene for Moyamoya disease.</title>
        <authorList>
            <person name="Mukawa M."/>
            <person name="Nariai T."/>
            <person name="Onda H."/>
            <person name="Yoneyama T."/>
            <person name="Aihara Y."/>
            <person name="Hirota K."/>
            <person name="Kudo T."/>
            <person name="Sumita K."/>
            <person name="Maehara T."/>
            <person name="Kawamata T."/>
            <person name="Kasuya H."/>
            <person name="Akagawa H."/>
        </authorList>
    </citation>
    <scope>VARIANT GLN-249</scope>
</reference>
<reference key="15">
    <citation type="journal article" date="2018" name="Nat. Cell Biol.">
        <title>Deregulation of CRAD-controlled cytoskeleton initiates mucinous colorectal cancer via beta-catenin.</title>
        <authorList>
            <person name="Jung Y.S."/>
            <person name="Wang W."/>
            <person name="Jun S."/>
            <person name="Zhang J."/>
            <person name="Srivastava M."/>
            <person name="Kim M.J."/>
            <person name="Lien E.M."/>
            <person name="Shang J."/>
            <person name="Chen J."/>
            <person name="McCrea P.D."/>
            <person name="Zhang S."/>
            <person name="Park J.I."/>
        </authorList>
    </citation>
    <scope>FUNCTION</scope>
    <scope>INTERACTION WITH CAPZA1; CAPZA2 AND CAPZB</scope>
    <scope>SUBCELLULAR LOCATION</scope>
    <scope>TISSUE SPECIFICITY</scope>
</reference>
<gene>
    <name evidence="13" type="primary">CRACD</name>
    <name evidence="10" type="synonym">CRAD</name>
    <name evidence="13" type="synonym">KIAA1211</name>
</gene>
<proteinExistence type="evidence at protein level"/>
<organism>
    <name type="scientific">Homo sapiens</name>
    <name type="common">Human</name>
    <dbReference type="NCBI Taxonomy" id="9606"/>
    <lineage>
        <taxon>Eukaryota</taxon>
        <taxon>Metazoa</taxon>
        <taxon>Chordata</taxon>
        <taxon>Craniata</taxon>
        <taxon>Vertebrata</taxon>
        <taxon>Euteleostomi</taxon>
        <taxon>Mammalia</taxon>
        <taxon>Eutheria</taxon>
        <taxon>Euarchontoglires</taxon>
        <taxon>Primates</taxon>
        <taxon>Haplorrhini</taxon>
        <taxon>Catarrhini</taxon>
        <taxon>Hominidae</taxon>
        <taxon>Homo</taxon>
    </lineage>
</organism>
<evidence type="ECO:0000250" key="1">
    <source>
        <dbReference type="UniProtKB" id="Q5PR69"/>
    </source>
</evidence>
<evidence type="ECO:0000256" key="2">
    <source>
        <dbReference type="SAM" id="MobiDB-lite"/>
    </source>
</evidence>
<evidence type="ECO:0000269" key="3">
    <source>
    </source>
</evidence>
<evidence type="ECO:0000269" key="4">
    <source>
    </source>
</evidence>
<evidence type="ECO:0000269" key="5">
    <source>
    </source>
</evidence>
<evidence type="ECO:0000269" key="6">
    <source>
    </source>
</evidence>
<evidence type="ECO:0000269" key="7">
    <source>
    </source>
</evidence>
<evidence type="ECO:0000269" key="8">
    <source>
    </source>
</evidence>
<evidence type="ECO:0000269" key="9">
    <source ref="4"/>
</evidence>
<evidence type="ECO:0000303" key="10">
    <source>
    </source>
</evidence>
<evidence type="ECO:0000305" key="11"/>
<evidence type="ECO:0000305" key="12">
    <source>
    </source>
</evidence>
<evidence type="ECO:0000312" key="13">
    <source>
        <dbReference type="HGNC" id="HGNC:29219"/>
    </source>
</evidence>
<evidence type="ECO:0007744" key="14">
    <source>
    </source>
</evidence>
<evidence type="ECO:0007744" key="15">
    <source>
    </source>
</evidence>
<evidence type="ECO:0007744" key="16">
    <source>
    </source>
</evidence>
<evidence type="ECO:0007744" key="17">
    <source>
    </source>
</evidence>
<sequence length="1233" mass="136760">MGTRAFSHDSIFIPDGGAESEQTVQAMSQDNILGKVKTLQQQLGKNIKFGQRSPNAIPMNKANSGEASLEEDLFLTSPMEIVTQQDIVLSDAENKSSDTPSSLSPLNLPGAGSEMEEKVAPVKPSRPKRHFSSAGTIESVNLDAIPLAIARLDNSAAKHKLAVKPKKQRVSKKHRRLAQDPQHEQGGLESRPCLDQNGHPGEDKPTWHEEEPNPLDSEEERRRQEDYWRELEAKCKRQKAEAAEKRRLEEQRLQALERRLWEENRRQELLEEEGEGQEPPLEAERAPREEQQRSLEAPGWEDAERREREERERLEAEEERRRLQAQAQAEERRRLEEDARLEERRRQEEEEGRCAEELKRQEEEEAEGWEELEQQEAEVQGPPEALEETGEGRRGAEEEDLGEEEEEGQAHLEDWRGQLSELLNDFEERLEDQERLKPEGQREHSEEPGICEEQNPEAERRREQQGRSGDFQGADRPGPEEKREEGDTEPLLKQEGPVEAAQPPVERKEAAALEQGRKVEELRWQEVDERQTMPRPYTFQVSSGGKQILFPKVNLSPVTPAKDTGLTAAPQEPKAPKASPVQHALPSSLSVPHTAILVTGAQLCGPAVNLSQIKDTACKSLLGLEEKKHAEAPAGENPPRGPGDARAGSGKAKPRQESPSSASALAEWASIRSRILKNAESDPRSSERDQLRPGDESTPRGRCDSRGNQRKTPPVNAKFSIMPAWQKFSDGGTETSKQSTEAESIRKRPMLGPSEETAPQPPPAGVRELGKGPEKSEMHREPADTTEGCKFAKDLPSFLVPSLPYPPQKVVAHTEFTTSSDSETANGIAKPDPVMPGGEEKASPFGIKLRRTNYSLRFNCDQQAEQKKKKRHSSTGDSADAGPPAAGSARGEKEMEGVALKHGPSLPQERKQAPSTRRDSAEPSSSRSVPVAHPGPPPASSQTPAPEHDKAANKMPLAQKPALAPKPTSQTPPASPLSKLSRPYLVELLSRRAGRPDPEPSEPSKEDQESSDRRPPSPPGPEERKGQKRDEEEEATERKPASPPLPATQQEKPSQTPEAGRKEKPMLQSRHSLDGSKLTEKVETAQPLWITLALQKQKGFREQQATREERKQAREAKQAEKLSKENVSVSVQPGSSSVSRAGSLHKSTALPEEKRPETAVSRLERREQLKKANTLPTSVTVEISDSAPPAPLVKEVTKRFSTPDAAPVSTEPAWLALAKRKAKAWSDCPQIIK</sequence>
<protein>
    <recommendedName>
        <fullName evidence="13">Capping protein-inhibiting regulator of actin dynamics</fullName>
    </recommendedName>
    <alternativeName>
        <fullName evidence="10">Cancer-related regulator of actin dynamics</fullName>
    </alternativeName>
</protein>
<name>CRACD_HUMAN</name>
<dbReference type="EMBL" id="AB033037">
    <property type="protein sequence ID" value="BAA86525.1"/>
    <property type="status" value="ALT_SEQ"/>
    <property type="molecule type" value="mRNA"/>
</dbReference>
<dbReference type="EMBL" id="AK126014">
    <property type="protein sequence ID" value="BAC86392.1"/>
    <property type="molecule type" value="mRNA"/>
</dbReference>
<dbReference type="EMBL" id="AC068620">
    <property type="status" value="NOT_ANNOTATED_CDS"/>
    <property type="molecule type" value="Genomic_DNA"/>
</dbReference>
<dbReference type="EMBL" id="CH471057">
    <property type="protein sequence ID" value="EAX05481.1"/>
    <property type="molecule type" value="Genomic_DNA"/>
</dbReference>
<dbReference type="EMBL" id="AL133028">
    <property type="protein sequence ID" value="CAB61360.2"/>
    <property type="status" value="ALT_INIT"/>
    <property type="molecule type" value="mRNA"/>
</dbReference>
<dbReference type="EMBL" id="AL137336">
    <property type="protein sequence ID" value="CAB70699.1"/>
    <property type="molecule type" value="mRNA"/>
</dbReference>
<dbReference type="CCDS" id="CCDS43230.1"/>
<dbReference type="PIR" id="T42702">
    <property type="entry name" value="T42702"/>
</dbReference>
<dbReference type="RefSeq" id="NP_001380310.1">
    <property type="nucleotide sequence ID" value="NM_001393381.1"/>
</dbReference>
<dbReference type="RefSeq" id="NP_001380311.1">
    <property type="nucleotide sequence ID" value="NM_001393382.1"/>
</dbReference>
<dbReference type="RefSeq" id="NP_065773.1">
    <property type="nucleotide sequence ID" value="NM_020722.2"/>
</dbReference>
<dbReference type="RefSeq" id="XP_005265809.1">
    <property type="nucleotide sequence ID" value="XM_005265752.3"/>
</dbReference>
<dbReference type="RefSeq" id="XP_011532699.1">
    <property type="nucleotide sequence ID" value="XM_011534397.2"/>
</dbReference>
<dbReference type="BioGRID" id="121552">
    <property type="interactions" value="48"/>
</dbReference>
<dbReference type="FunCoup" id="Q6ZU35">
    <property type="interactions" value="390"/>
</dbReference>
<dbReference type="IntAct" id="Q6ZU35">
    <property type="interactions" value="18"/>
</dbReference>
<dbReference type="MINT" id="Q6ZU35"/>
<dbReference type="STRING" id="9606.ENSP00000264229"/>
<dbReference type="GlyGen" id="Q6ZU35">
    <property type="glycosylation" value="2 sites, 1 O-linked glycan (1 site)"/>
</dbReference>
<dbReference type="iPTMnet" id="Q6ZU35"/>
<dbReference type="PhosphoSitePlus" id="Q6ZU35"/>
<dbReference type="BioMuta" id="KIAA1211"/>
<dbReference type="DMDM" id="296439324"/>
<dbReference type="jPOST" id="Q6ZU35"/>
<dbReference type="MassIVE" id="Q6ZU35"/>
<dbReference type="PaxDb" id="9606-ENSP00000423366"/>
<dbReference type="PeptideAtlas" id="Q6ZU35"/>
<dbReference type="ProteomicsDB" id="68308"/>
<dbReference type="Pumba" id="Q6ZU35"/>
<dbReference type="Antibodypedia" id="56722">
    <property type="antibodies" value="12 antibodies from 7 providers"/>
</dbReference>
<dbReference type="DNASU" id="57482"/>
<dbReference type="Ensembl" id="ENST00000264229.11">
    <property type="protein sequence ID" value="ENSP00000264229.6"/>
    <property type="gene ID" value="ENSG00000109265.15"/>
</dbReference>
<dbReference type="Ensembl" id="ENST00000504228.6">
    <property type="protein sequence ID" value="ENSP00000423366.1"/>
    <property type="gene ID" value="ENSG00000109265.15"/>
</dbReference>
<dbReference type="Ensembl" id="ENST00000682029.1">
    <property type="protein sequence ID" value="ENSP00000507165.1"/>
    <property type="gene ID" value="ENSG00000109265.15"/>
</dbReference>
<dbReference type="GeneID" id="57482"/>
<dbReference type="KEGG" id="hsa:57482"/>
<dbReference type="MANE-Select" id="ENST00000682029.1">
    <property type="protein sequence ID" value="ENSP00000507165.1"/>
    <property type="RefSeq nucleotide sequence ID" value="NM_001393381.1"/>
    <property type="RefSeq protein sequence ID" value="NP_001380310.1"/>
</dbReference>
<dbReference type="UCSC" id="uc003hbk.3">
    <property type="organism name" value="human"/>
</dbReference>
<dbReference type="AGR" id="HGNC:29219"/>
<dbReference type="CTD" id="57482"/>
<dbReference type="DisGeNET" id="57482"/>
<dbReference type="GeneCards" id="CRACD"/>
<dbReference type="HGNC" id="HGNC:29219">
    <property type="gene designation" value="CRACD"/>
</dbReference>
<dbReference type="HPA" id="ENSG00000109265">
    <property type="expression patterns" value="Tissue enhanced (intestine, testis)"/>
</dbReference>
<dbReference type="MIM" id="618327">
    <property type="type" value="gene"/>
</dbReference>
<dbReference type="neXtProt" id="NX_Q6ZU35"/>
<dbReference type="OpenTargets" id="ENSG00000109265"/>
<dbReference type="VEuPathDB" id="HostDB:ENSG00000109265"/>
<dbReference type="eggNOG" id="ENOG502QQWT">
    <property type="taxonomic scope" value="Eukaryota"/>
</dbReference>
<dbReference type="GeneTree" id="ENSGT00940000161471"/>
<dbReference type="HOGENOM" id="CLU_008508_0_0_1"/>
<dbReference type="InParanoid" id="Q6ZU35"/>
<dbReference type="OMA" id="ECKFAKD"/>
<dbReference type="OrthoDB" id="9905722at2759"/>
<dbReference type="PAN-GO" id="Q6ZU35">
    <property type="GO annotations" value="2 GO annotations based on evolutionary models"/>
</dbReference>
<dbReference type="PhylomeDB" id="Q6ZU35"/>
<dbReference type="TreeFam" id="TF335584"/>
<dbReference type="PathwayCommons" id="Q6ZU35"/>
<dbReference type="SignaLink" id="Q6ZU35"/>
<dbReference type="BioGRID-ORCS" id="57482">
    <property type="hits" value="91 hits in 1142 CRISPR screens"/>
</dbReference>
<dbReference type="ChiTaRS" id="KIAA1211">
    <property type="organism name" value="human"/>
</dbReference>
<dbReference type="GenomeRNAi" id="57482"/>
<dbReference type="Pharos" id="Q6ZU35">
    <property type="development level" value="Tdark"/>
</dbReference>
<dbReference type="PRO" id="PR:Q6ZU35"/>
<dbReference type="Proteomes" id="UP000005640">
    <property type="component" value="Chromosome 4"/>
</dbReference>
<dbReference type="RNAct" id="Q6ZU35">
    <property type="molecule type" value="protein"/>
</dbReference>
<dbReference type="Bgee" id="ENSG00000109265">
    <property type="expression patterns" value="Expressed in ileal mucosa and 148 other cell types or tissues"/>
</dbReference>
<dbReference type="ExpressionAtlas" id="Q6ZU35">
    <property type="expression patterns" value="baseline and differential"/>
</dbReference>
<dbReference type="GO" id="GO:0005829">
    <property type="term" value="C:cytosol"/>
    <property type="evidence" value="ECO:0007669"/>
    <property type="project" value="UniProtKB-SubCell"/>
</dbReference>
<dbReference type="GO" id="GO:0010669">
    <property type="term" value="P:epithelial structure maintenance"/>
    <property type="evidence" value="ECO:0000250"/>
    <property type="project" value="UniProtKB"/>
</dbReference>
<dbReference type="GO" id="GO:0030277">
    <property type="term" value="P:maintenance of gastrointestinal epithelium"/>
    <property type="evidence" value="ECO:0000250"/>
    <property type="project" value="UniProtKB"/>
</dbReference>
<dbReference type="GO" id="GO:2000813">
    <property type="term" value="P:negative regulation of barbed-end actin filament capping"/>
    <property type="evidence" value="ECO:0000314"/>
    <property type="project" value="UniProtKB"/>
</dbReference>
<dbReference type="GO" id="GO:0030838">
    <property type="term" value="P:positive regulation of actin filament polymerization"/>
    <property type="evidence" value="ECO:0000314"/>
    <property type="project" value="UniProtKB"/>
</dbReference>
<dbReference type="InterPro" id="IPR052853">
    <property type="entry name" value="Actin_dynamics_regulator"/>
</dbReference>
<dbReference type="InterPro" id="IPR028030">
    <property type="entry name" value="DUF4592"/>
</dbReference>
<dbReference type="PANTHER" id="PTHR47574">
    <property type="entry name" value="CANCER-RELATED REGULATOR OF ACTIN DYNAMICS"/>
    <property type="match status" value="1"/>
</dbReference>
<dbReference type="PANTHER" id="PTHR47574:SF3">
    <property type="entry name" value="CAPPING PROTEIN-INHIBITING REGULATOR OF ACTIN DYNAMICS"/>
    <property type="match status" value="1"/>
</dbReference>
<dbReference type="Pfam" id="PF15262">
    <property type="entry name" value="DUF4592"/>
    <property type="match status" value="1"/>
</dbReference>
<feature type="chain" id="PRO_0000342475" description="Capping protein-inhibiting regulator of actin dynamics">
    <location>
        <begin position="1"/>
        <end position="1233"/>
    </location>
</feature>
<feature type="region of interest" description="Disordered" evidence="2">
    <location>
        <begin position="92"/>
        <end position="136"/>
    </location>
</feature>
<feature type="region of interest" description="Disordered" evidence="2">
    <location>
        <begin position="157"/>
        <end position="224"/>
    </location>
</feature>
<feature type="region of interest" description="Disordered" evidence="2">
    <location>
        <begin position="269"/>
        <end position="527"/>
    </location>
</feature>
<feature type="region of interest" description="Required for interaction with actin-capping proteins" evidence="8">
    <location>
        <begin position="321"/>
        <end position="472"/>
    </location>
</feature>
<feature type="region of interest" description="Disordered" evidence="2">
    <location>
        <begin position="560"/>
        <end position="586"/>
    </location>
</feature>
<feature type="region of interest" description="Disordered" evidence="2">
    <location>
        <begin position="629"/>
        <end position="788"/>
    </location>
</feature>
<feature type="region of interest" description="Disordered" evidence="2">
    <location>
        <begin position="815"/>
        <end position="1082"/>
    </location>
</feature>
<feature type="region of interest" description="Disordered" evidence="2">
    <location>
        <begin position="1097"/>
        <end position="1186"/>
    </location>
</feature>
<feature type="compositionally biased region" description="Basic residues" evidence="2">
    <location>
        <begin position="157"/>
        <end position="176"/>
    </location>
</feature>
<feature type="compositionally biased region" description="Basic and acidic residues" evidence="2">
    <location>
        <begin position="200"/>
        <end position="211"/>
    </location>
</feature>
<feature type="compositionally biased region" description="Basic and acidic residues" evidence="2">
    <location>
        <begin position="282"/>
        <end position="293"/>
    </location>
</feature>
<feature type="compositionally biased region" description="Basic and acidic residues" evidence="2">
    <location>
        <begin position="302"/>
        <end position="322"/>
    </location>
</feature>
<feature type="compositionally biased region" description="Basic and acidic residues" evidence="2">
    <location>
        <begin position="329"/>
        <end position="362"/>
    </location>
</feature>
<feature type="compositionally biased region" description="Acidic residues" evidence="2">
    <location>
        <begin position="363"/>
        <end position="376"/>
    </location>
</feature>
<feature type="compositionally biased region" description="Acidic residues" evidence="2">
    <location>
        <begin position="397"/>
        <end position="407"/>
    </location>
</feature>
<feature type="compositionally biased region" description="Basic and acidic residues" evidence="2">
    <location>
        <begin position="432"/>
        <end position="447"/>
    </location>
</feature>
<feature type="compositionally biased region" description="Basic and acidic residues" evidence="2">
    <location>
        <begin position="505"/>
        <end position="527"/>
    </location>
</feature>
<feature type="compositionally biased region" description="Basic and acidic residues" evidence="2">
    <location>
        <begin position="677"/>
        <end position="707"/>
    </location>
</feature>
<feature type="compositionally biased region" description="Polar residues" evidence="2">
    <location>
        <begin position="732"/>
        <end position="742"/>
    </location>
</feature>
<feature type="compositionally biased region" description="Basic and acidic residues" evidence="2">
    <location>
        <begin position="768"/>
        <end position="783"/>
    </location>
</feature>
<feature type="compositionally biased region" description="Polar residues" evidence="2">
    <location>
        <begin position="815"/>
        <end position="825"/>
    </location>
</feature>
<feature type="compositionally biased region" description="Polar residues" evidence="2">
    <location>
        <begin position="852"/>
        <end position="863"/>
    </location>
</feature>
<feature type="compositionally biased region" description="Low complexity" evidence="2">
    <location>
        <begin position="876"/>
        <end position="889"/>
    </location>
</feature>
<feature type="compositionally biased region" description="Basic and acidic residues" evidence="2">
    <location>
        <begin position="908"/>
        <end position="921"/>
    </location>
</feature>
<feature type="compositionally biased region" description="Low complexity" evidence="2">
    <location>
        <begin position="956"/>
        <end position="967"/>
    </location>
</feature>
<feature type="compositionally biased region" description="Basic and acidic residues" evidence="2">
    <location>
        <begin position="994"/>
        <end position="1040"/>
    </location>
</feature>
<feature type="compositionally biased region" description="Polar residues" evidence="2">
    <location>
        <begin position="1047"/>
        <end position="1057"/>
    </location>
</feature>
<feature type="compositionally biased region" description="Basic and acidic residues" evidence="2">
    <location>
        <begin position="1059"/>
        <end position="1082"/>
    </location>
</feature>
<feature type="compositionally biased region" description="Basic and acidic residues" evidence="2">
    <location>
        <begin position="1099"/>
        <end position="1124"/>
    </location>
</feature>
<feature type="compositionally biased region" description="Low complexity" evidence="2">
    <location>
        <begin position="1127"/>
        <end position="1139"/>
    </location>
</feature>
<feature type="compositionally biased region" description="Basic and acidic residues" evidence="2">
    <location>
        <begin position="1151"/>
        <end position="1170"/>
    </location>
</feature>
<feature type="compositionally biased region" description="Polar residues" evidence="2">
    <location>
        <begin position="1174"/>
        <end position="1183"/>
    </location>
</feature>
<feature type="modified residue" description="Phosphoserine" evidence="1">
    <location>
        <position position="7"/>
    </location>
</feature>
<feature type="modified residue" description="Phosphoserine" evidence="1">
    <location>
        <position position="28"/>
    </location>
</feature>
<feature type="modified residue" description="Phosphoserine" evidence="1">
    <location>
        <position position="132"/>
    </location>
</feature>
<feature type="modified residue" description="Phosphoserine" evidence="17">
    <location>
        <position position="420"/>
    </location>
</feature>
<feature type="modified residue" description="Phosphoserine" evidence="14 16">
    <location>
        <position position="556"/>
    </location>
</feature>
<feature type="modified residue" description="Phosphothreonine" evidence="14">
    <location>
        <position position="559"/>
    </location>
</feature>
<feature type="modified residue" description="Phosphothreonine" evidence="15">
    <location>
        <position position="971"/>
    </location>
</feature>
<feature type="modified residue" description="Phosphoserine" evidence="15">
    <location>
        <position position="975"/>
    </location>
</feature>
<feature type="modified residue" description="Phosphoserine" evidence="16">
    <location>
        <position position="1017"/>
    </location>
</feature>
<feature type="sequence variant" id="VAR_079174" description="In dbSNP:rs1379374919." evidence="7">
    <original>E</original>
    <variation>Q</variation>
    <location>
        <position position="249"/>
    </location>
</feature>
<feature type="sequence variant" id="VAR_044205" description="In dbSNP:rs6823339.">
    <original>L</original>
    <variation>I</variation>
    <location>
        <position position="269"/>
    </location>
</feature>
<feature type="sequence variant" id="VAR_044206" description="In dbSNP:rs7672073." evidence="3 4 5 6 9">
    <original>R</original>
    <variation>P</variation>
    <location>
        <position position="655"/>
    </location>
</feature>
<feature type="sequence variant" id="VAR_044207" description="In dbSNP:rs3796546.">
    <original>R</original>
    <variation>Q</variation>
    <location>
        <position position="710"/>
    </location>
</feature>
<feature type="sequence variant" id="VAR_044208" description="In dbSNP:rs3796547." evidence="5">
    <original>S</original>
    <variation>L</variation>
    <location>
        <position position="776"/>
    </location>
</feature>
<feature type="sequence conflict" description="In Ref. 2; BAC86392." evidence="11" ref="2">
    <original>G</original>
    <variation>R</variation>
    <location>
        <position position="299"/>
    </location>
</feature>
<feature type="sequence conflict" description="In Ref. 2; BAC86392." evidence="11" ref="2">
    <original>P</original>
    <variation>L</variation>
    <location>
        <position position="654"/>
    </location>
</feature>
<feature type="sequence conflict" description="In Ref. 2; BAC86392." evidence="11" ref="2">
    <original>E</original>
    <variation>G</variation>
    <location>
        <position position="777"/>
    </location>
</feature>